<sequence>MRWCLFALWVFGVATVVTAAEEPHHDAAPQTDNEVDLTEDDKRAWSSLHSGWAKRAWQDMSSAWGKRAWQDLNSAWGKRGWQDLNSAWGKRAWQDLNSAWGKRGWQDLNSAWGKRDDDEAMEKKSWQDLNSVWGKRAWQDLNSAWGKRAWQDLNSAWGKRGWNDISSVWGKRAWQDLNSAWGKRAWQDMSSAWGKRAPEKWAAFHGSWGKRSSIEPDYEEIDAVEQLVPYQQAPNEEHIDAPEKKAWSALHGTWGKRPVKPMFNNEHSATTNEA</sequence>
<evidence type="ECO:0000255" key="1"/>
<evidence type="ECO:0000269" key="2">
    <source>
    </source>
</evidence>
<evidence type="ECO:0000269" key="3">
    <source>
    </source>
</evidence>
<evidence type="ECO:0000305" key="4"/>
<evidence type="ECO:0000305" key="5">
    <source>
    </source>
</evidence>
<protein>
    <recommendedName>
        <fullName>Prothoracicostatic peptide</fullName>
    </recommendedName>
    <alternativeName>
        <fullName>Bom-PTSP</fullName>
    </alternativeName>
</protein>
<comment type="function">
    <text evidence="2 3">Inhibits ecdysteroid biosynthesis in the prothoracic gland of fifth instar larvae, with maximum inhibition during the spinning stage. When administered to day 8 fifth instar larvae it produces a significant delay in the commencement spinning behavior.</text>
</comment>
<comment type="subcellular location">
    <subcellularLocation>
        <location>Secreted</location>
    </subcellularLocation>
</comment>
<comment type="mass spectrometry"/>
<accession>P82003</accession>
<accession>Q95YF7</accession>
<dbReference type="EMBL" id="AB073553">
    <property type="protein sequence ID" value="BAB70681.1"/>
    <property type="molecule type" value="mRNA"/>
</dbReference>
<dbReference type="RefSeq" id="NP_001036890.1">
    <property type="nucleotide sequence ID" value="NM_001043425.1"/>
</dbReference>
<dbReference type="STRING" id="7091.P82003"/>
<dbReference type="EnsemblMetazoa" id="NM_001043425.1">
    <property type="protein sequence ID" value="NP_001036890.1"/>
    <property type="gene ID" value="GeneID_692434"/>
</dbReference>
<dbReference type="GeneID" id="692434"/>
<dbReference type="KEGG" id="bmor:692434"/>
<dbReference type="CTD" id="692434"/>
<dbReference type="InParanoid" id="P82003"/>
<dbReference type="Proteomes" id="UP000005204">
    <property type="component" value="Unassembled WGS sequence"/>
</dbReference>
<dbReference type="GO" id="GO:0005615">
    <property type="term" value="C:extracellular space"/>
    <property type="evidence" value="ECO:0000314"/>
    <property type="project" value="UniProtKB"/>
</dbReference>
<dbReference type="GO" id="GO:0005179">
    <property type="term" value="F:hormone activity"/>
    <property type="evidence" value="ECO:0007669"/>
    <property type="project" value="UniProtKB-KW"/>
</dbReference>
<dbReference type="GO" id="GO:0002168">
    <property type="term" value="P:instar larval development"/>
    <property type="evidence" value="ECO:0000314"/>
    <property type="project" value="UniProtKB"/>
</dbReference>
<dbReference type="PANTHER" id="PTHR14054">
    <property type="entry name" value="REPETIN"/>
    <property type="match status" value="1"/>
</dbReference>
<dbReference type="PANTHER" id="PTHR14054:SF14">
    <property type="entry name" value="REPETIN"/>
    <property type="match status" value="1"/>
</dbReference>
<keyword id="KW-0027">Amidation</keyword>
<keyword id="KW-0165">Cleavage on pair of basic residues</keyword>
<keyword id="KW-0903">Direct protein sequencing</keyword>
<keyword id="KW-0372">Hormone</keyword>
<keyword id="KW-1185">Reference proteome</keyword>
<keyword id="KW-0964">Secreted</keyword>
<keyword id="KW-0732">Signal</keyword>
<reference key="1">
    <citation type="submission" date="2001-10" db="EMBL/GenBank/DDBJ databases">
        <title>cDNA of Bombyx prothoracicostatic peptide (PTSP) encodes a unique peptide family of -WXXXXXXW-amide.</title>
        <authorList>
            <person name="Hua Y.-J."/>
            <person name="Roller L."/>
            <person name="Kataoka H."/>
            <person name="Tanaka Y."/>
        </authorList>
    </citation>
    <scope>NUCLEOTIDE SEQUENCE [MRNA]</scope>
    <source>
        <tissue>Brain</tissue>
    </source>
</reference>
<reference key="2">
    <citation type="journal article" date="1999" name="J. Biol. Chem.">
        <title>Identification of a prothoracicostatic peptide in the larval brain of the silkworm, Bombyx mori.</title>
        <authorList>
            <person name="Hua Y.-J."/>
            <person name="Tanaka Y."/>
            <person name="Nakamura K."/>
            <person name="Sakakibara M."/>
            <person name="Nagata S."/>
            <person name="Kataoka H."/>
        </authorList>
    </citation>
    <scope>PROTEIN SEQUENCE OF 68-76</scope>
    <scope>FUNCTION</scope>
    <scope>MASS SPECTROMETRY</scope>
    <scope>AMIDATION AT TRP-76; TRP-100; TRP-145; TRP-157 AND TRP-181</scope>
    <source>
        <strain>C145 X N140</strain>
        <tissue>Brain</tissue>
    </source>
</reference>
<reference key="3">
    <citation type="journal article" date="2000" name="J. Biol. Chem.">
        <authorList>
            <person name="Hua Y.-J."/>
            <person name="Tanaka Y."/>
            <person name="Nakamura K."/>
            <person name="Sakakibara M."/>
            <person name="Nagata S."/>
            <person name="Kataoka H."/>
        </authorList>
    </citation>
    <scope>ERRATUM OF PUBMED:10531308</scope>
</reference>
<reference key="4">
    <citation type="journal article" date="2004" name="Arch. Insect Biochem. Physiol.">
        <title>Bombyx mori prothoracicostatic peptide inhibits ecdysteroidogenesis in vivo.</title>
        <authorList>
            <person name="Liu X."/>
            <person name="Tanaka Y."/>
            <person name="Song Q."/>
            <person name="Xu B."/>
            <person name="Hua Y.-J."/>
        </authorList>
    </citation>
    <scope>FUNCTION</scope>
</reference>
<name>PTSP_BOMMO</name>
<proteinExistence type="evidence at protein level"/>
<organism>
    <name type="scientific">Bombyx mori</name>
    <name type="common">Silk moth</name>
    <dbReference type="NCBI Taxonomy" id="7091"/>
    <lineage>
        <taxon>Eukaryota</taxon>
        <taxon>Metazoa</taxon>
        <taxon>Ecdysozoa</taxon>
        <taxon>Arthropoda</taxon>
        <taxon>Hexapoda</taxon>
        <taxon>Insecta</taxon>
        <taxon>Pterygota</taxon>
        <taxon>Neoptera</taxon>
        <taxon>Endopterygota</taxon>
        <taxon>Lepidoptera</taxon>
        <taxon>Glossata</taxon>
        <taxon>Ditrysia</taxon>
        <taxon>Bombycoidea</taxon>
        <taxon>Bombycidae</taxon>
        <taxon>Bombycinae</taxon>
        <taxon>Bombyx</taxon>
    </lineage>
</organism>
<feature type="signal peptide" evidence="1">
    <location>
        <begin position="1"/>
        <end position="19"/>
    </location>
</feature>
<feature type="propeptide" id="PRO_0000045250" evidence="5">
    <location>
        <begin position="20"/>
        <end position="67"/>
    </location>
</feature>
<feature type="peptide" id="PRO_0000045251" description="Prothoracicostatic peptide">
    <location>
        <begin position="68"/>
        <end position="76"/>
    </location>
</feature>
<feature type="propeptide" id="PRO_0000045252" evidence="4">
    <location>
        <begin position="77"/>
        <end position="91"/>
    </location>
</feature>
<feature type="peptide" id="PRO_0000045253" description="Prothoracicostatic peptide" evidence="4">
    <location>
        <begin position="92"/>
        <end position="100"/>
    </location>
</feature>
<feature type="propeptide" id="PRO_0000045254" evidence="4">
    <location>
        <begin position="101"/>
        <end position="136"/>
    </location>
</feature>
<feature type="peptide" id="PRO_0000045255" description="Prothoracicostatic peptide" evidence="4">
    <location>
        <begin position="137"/>
        <end position="145"/>
    </location>
</feature>
<feature type="propeptide" id="PRO_0000045256" evidence="4">
    <location>
        <begin position="146"/>
        <end position="148"/>
    </location>
</feature>
<feature type="peptide" id="PRO_0000045257" description="Prothoracicostatic peptide" evidence="4">
    <location>
        <begin position="149"/>
        <end position="157"/>
    </location>
</feature>
<feature type="propeptide" id="PRO_0000045258" evidence="4">
    <location>
        <begin position="158"/>
        <end position="172"/>
    </location>
</feature>
<feature type="peptide" id="PRO_0000045259" description="Prothoracicostatic peptide" evidence="4">
    <location>
        <begin position="173"/>
        <end position="181"/>
    </location>
</feature>
<feature type="propeptide" id="PRO_0000045260" evidence="4">
    <location>
        <begin position="182"/>
        <end position="274"/>
    </location>
</feature>
<feature type="modified residue" description="Tryptophan amide" evidence="2">
    <location>
        <position position="76"/>
    </location>
</feature>
<feature type="modified residue" description="Tryptophan amide" evidence="2">
    <location>
        <position position="100"/>
    </location>
</feature>
<feature type="modified residue" description="Tryptophan amide" evidence="2">
    <location>
        <position position="145"/>
    </location>
</feature>
<feature type="modified residue" description="Tryptophan amide" evidence="2">
    <location>
        <position position="157"/>
    </location>
</feature>
<feature type="modified residue" description="Tryptophan amide" evidence="2">
    <location>
        <position position="181"/>
    </location>
</feature>